<dbReference type="EC" id="3.6.5.-" evidence="2"/>
<dbReference type="EMBL" id="U21667">
    <property type="protein sequence ID" value="AAC46607.1"/>
    <property type="molecule type" value="Genomic_DNA"/>
</dbReference>
<dbReference type="SMR" id="Q23716"/>
<dbReference type="VEuPathDB" id="CryptoDB:cgd8_2930"/>
<dbReference type="VEuPathDB" id="CryptoDB:CPATCC_0003070"/>
<dbReference type="GO" id="GO:0005829">
    <property type="term" value="C:cytosol"/>
    <property type="evidence" value="ECO:0007669"/>
    <property type="project" value="TreeGrafter"/>
</dbReference>
<dbReference type="GO" id="GO:1990904">
    <property type="term" value="C:ribonucleoprotein complex"/>
    <property type="evidence" value="ECO:0007669"/>
    <property type="project" value="TreeGrafter"/>
</dbReference>
<dbReference type="GO" id="GO:0005525">
    <property type="term" value="F:GTP binding"/>
    <property type="evidence" value="ECO:0007669"/>
    <property type="project" value="UniProtKB-KW"/>
</dbReference>
<dbReference type="GO" id="GO:0003924">
    <property type="term" value="F:GTPase activity"/>
    <property type="evidence" value="ECO:0007669"/>
    <property type="project" value="InterPro"/>
</dbReference>
<dbReference type="GO" id="GO:0043022">
    <property type="term" value="F:ribosome binding"/>
    <property type="evidence" value="ECO:0007669"/>
    <property type="project" value="TreeGrafter"/>
</dbReference>
<dbReference type="GO" id="GO:0003746">
    <property type="term" value="F:translation elongation factor activity"/>
    <property type="evidence" value="ECO:0007669"/>
    <property type="project" value="UniProtKB-KW"/>
</dbReference>
<dbReference type="CDD" id="cd01681">
    <property type="entry name" value="aeEF2_snRNP_like_IV"/>
    <property type="match status" value="1"/>
</dbReference>
<dbReference type="CDD" id="cd04096">
    <property type="entry name" value="eEF2_snRNP_like_C"/>
    <property type="match status" value="1"/>
</dbReference>
<dbReference type="CDD" id="cd01885">
    <property type="entry name" value="EF2"/>
    <property type="match status" value="1"/>
</dbReference>
<dbReference type="CDD" id="cd16268">
    <property type="entry name" value="EF2_II"/>
    <property type="match status" value="1"/>
</dbReference>
<dbReference type="CDD" id="cd16261">
    <property type="entry name" value="EF2_snRNP_III"/>
    <property type="match status" value="1"/>
</dbReference>
<dbReference type="FunFam" id="2.40.30.10:FF:000010">
    <property type="entry name" value="Translation elongation factor 2"/>
    <property type="match status" value="1"/>
</dbReference>
<dbReference type="FunFam" id="3.30.230.10:FF:000006">
    <property type="entry name" value="Translation elongation factor 2"/>
    <property type="match status" value="1"/>
</dbReference>
<dbReference type="FunFam" id="3.30.70.240:FF:000003">
    <property type="entry name" value="Translation elongation factor 2"/>
    <property type="match status" value="1"/>
</dbReference>
<dbReference type="FunFam" id="3.30.70.870:FF:000002">
    <property type="entry name" value="Translation elongation factor 2"/>
    <property type="match status" value="1"/>
</dbReference>
<dbReference type="FunFam" id="3.40.50.300:FF:000058">
    <property type="entry name" value="Translation elongation factor 2"/>
    <property type="match status" value="1"/>
</dbReference>
<dbReference type="Gene3D" id="3.30.230.10">
    <property type="match status" value="1"/>
</dbReference>
<dbReference type="Gene3D" id="3.30.70.240">
    <property type="match status" value="1"/>
</dbReference>
<dbReference type="Gene3D" id="3.30.70.870">
    <property type="entry name" value="Elongation Factor G (Translational Gtpase), domain 3"/>
    <property type="match status" value="1"/>
</dbReference>
<dbReference type="Gene3D" id="3.40.50.300">
    <property type="entry name" value="P-loop containing nucleotide triphosphate hydrolases"/>
    <property type="match status" value="1"/>
</dbReference>
<dbReference type="Gene3D" id="2.40.30.10">
    <property type="entry name" value="Translation factors"/>
    <property type="match status" value="1"/>
</dbReference>
<dbReference type="InterPro" id="IPR041095">
    <property type="entry name" value="EFG_II"/>
</dbReference>
<dbReference type="InterPro" id="IPR035647">
    <property type="entry name" value="EFG_III/V"/>
</dbReference>
<dbReference type="InterPro" id="IPR000640">
    <property type="entry name" value="EFG_V-like"/>
</dbReference>
<dbReference type="InterPro" id="IPR004161">
    <property type="entry name" value="EFTu-like_2"/>
</dbReference>
<dbReference type="InterPro" id="IPR031157">
    <property type="entry name" value="G_TR_CS"/>
</dbReference>
<dbReference type="InterPro" id="IPR027417">
    <property type="entry name" value="P-loop_NTPase"/>
</dbReference>
<dbReference type="InterPro" id="IPR020568">
    <property type="entry name" value="Ribosomal_Su5_D2-typ_SF"/>
</dbReference>
<dbReference type="InterPro" id="IPR014721">
    <property type="entry name" value="Ribsml_uS5_D2-typ_fold_subgr"/>
</dbReference>
<dbReference type="InterPro" id="IPR005225">
    <property type="entry name" value="Small_GTP-bd"/>
</dbReference>
<dbReference type="InterPro" id="IPR000795">
    <property type="entry name" value="T_Tr_GTP-bd_dom"/>
</dbReference>
<dbReference type="InterPro" id="IPR009000">
    <property type="entry name" value="Transl_B-barrel_sf"/>
</dbReference>
<dbReference type="InterPro" id="IPR005517">
    <property type="entry name" value="Transl_elong_EFG/EF2_IV"/>
</dbReference>
<dbReference type="NCBIfam" id="TIGR00231">
    <property type="entry name" value="small_GTP"/>
    <property type="match status" value="1"/>
</dbReference>
<dbReference type="PANTHER" id="PTHR42908:SF10">
    <property type="entry name" value="EUKARYOTIC TRANSLATION ELONGATION FACTOR 2"/>
    <property type="match status" value="1"/>
</dbReference>
<dbReference type="PANTHER" id="PTHR42908">
    <property type="entry name" value="TRANSLATION ELONGATION FACTOR-RELATED"/>
    <property type="match status" value="1"/>
</dbReference>
<dbReference type="Pfam" id="PF00679">
    <property type="entry name" value="EFG_C"/>
    <property type="match status" value="1"/>
</dbReference>
<dbReference type="Pfam" id="PF14492">
    <property type="entry name" value="EFG_III"/>
    <property type="match status" value="1"/>
</dbReference>
<dbReference type="Pfam" id="PF03764">
    <property type="entry name" value="EFG_IV"/>
    <property type="match status" value="1"/>
</dbReference>
<dbReference type="Pfam" id="PF00009">
    <property type="entry name" value="GTP_EFTU"/>
    <property type="match status" value="1"/>
</dbReference>
<dbReference type="Pfam" id="PF03144">
    <property type="entry name" value="GTP_EFTU_D2"/>
    <property type="match status" value="1"/>
</dbReference>
<dbReference type="PRINTS" id="PR00315">
    <property type="entry name" value="ELONGATNFCT"/>
</dbReference>
<dbReference type="SMART" id="SM00838">
    <property type="entry name" value="EFG_C"/>
    <property type="match status" value="1"/>
</dbReference>
<dbReference type="SMART" id="SM00889">
    <property type="entry name" value="EFG_IV"/>
    <property type="match status" value="1"/>
</dbReference>
<dbReference type="SUPFAM" id="SSF54980">
    <property type="entry name" value="EF-G C-terminal domain-like"/>
    <property type="match status" value="2"/>
</dbReference>
<dbReference type="SUPFAM" id="SSF52540">
    <property type="entry name" value="P-loop containing nucleoside triphosphate hydrolases"/>
    <property type="match status" value="1"/>
</dbReference>
<dbReference type="SUPFAM" id="SSF54211">
    <property type="entry name" value="Ribosomal protein S5 domain 2-like"/>
    <property type="match status" value="1"/>
</dbReference>
<dbReference type="SUPFAM" id="SSF50447">
    <property type="entry name" value="Translation proteins"/>
    <property type="match status" value="1"/>
</dbReference>
<dbReference type="PROSITE" id="PS00301">
    <property type="entry name" value="G_TR_1"/>
    <property type="match status" value="1"/>
</dbReference>
<dbReference type="PROSITE" id="PS51722">
    <property type="entry name" value="G_TR_2"/>
    <property type="match status" value="1"/>
</dbReference>
<sequence>MVNFTVEQIREIMGKPHNIRNMSVIAHVDHGKSTLTDSLVCKAGIIASKAAGDARFTDTRADEQERCITIKSTGISLFFEHDLEDGKGRQPFLINLIDSPGHVDFSSEVTAALRVTDGALVVVDAVDGVCIQTETVLRQALNERIRPVLHVNKVDRALLELQWEAEDIYQNFTRVIENVNVIISTYSDELMGDVQVFPEKGTVSFGSGLHGWAFTIEKFARIYAKKFGVEKSKMMQRLWGDNFFNPETKKFTKTQEPGSKRAFCQFIMEPICQLFSSIMNGDKAKYEKMLVNLGVELKGDDKALVDKPLLKKVMQLWLSAGDTLLEMIVTHLPSPAAAQKYRVENLYEGPQDDETAKGIRNCDPDAPLCMFVSKMVPTSDKGRFYAFGRVFSGTVATGQKVRIQGPRYVPGGKEDLNIKNIQRTVLMMGRYVEQIPDVPAGNTVGLVGIDQYLLKSGTITTSETAHNIASMKYSVSPVVRVAVRPKDNKELPKLVEGLKKLSKSDPLVVCSKEETGEHIIAGCGELHVEICLQDLQQEYAQIEIVASDPIVSYRETVVNLSNQTCLSKSPNKHNRLYMTAEPLPDGLTDDIEEGKVSPRDDPKERSNLLHDKYGFDKNAAMKIWCFGPETTGPNIMVDVTTGIQYLTEIKDHCNSAFQWATKEGILCEEDMRGIRFNLLDVTLHADAIHRGAGQITPTCRRVMYAAALTASPRLLEPMFLVEISAPQEVVGGIYATLNQRRGHVFHEEPKSGTPQVEIKAYLPVADSFKFTTVLRAATSGKAFPQCVFDHWELINGDPLEKGSKTEELVKAIRRRKNIKEEIPALDNYLDKL</sequence>
<organism>
    <name type="scientific">Cryptosporidium parvum</name>
    <dbReference type="NCBI Taxonomy" id="5807"/>
    <lineage>
        <taxon>Eukaryota</taxon>
        <taxon>Sar</taxon>
        <taxon>Alveolata</taxon>
        <taxon>Apicomplexa</taxon>
        <taxon>Conoidasida</taxon>
        <taxon>Coccidia</taxon>
        <taxon>Eucoccidiorida</taxon>
        <taxon>Eimeriorina</taxon>
        <taxon>Cryptosporidiidae</taxon>
        <taxon>Cryptosporidium</taxon>
    </lineage>
</organism>
<protein>
    <recommendedName>
        <fullName>Elongation factor 2</fullName>
        <shortName>EF-2</shortName>
        <ecNumber evidence="2">3.6.5.-</ecNumber>
    </recommendedName>
</protein>
<name>EF2_CRYPV</name>
<proteinExistence type="inferred from homology"/>
<reference key="1">
    <citation type="journal article" date="1995" name="Mol. Biochem. Parasitol.">
        <title>Molecular cloning and characterization of a Cryptosporidium parvum elongation factor-2 gene.</title>
        <authorList>
            <person name="Jones D.E."/>
            <person name="Tu T.D."/>
            <person name="Mathur S."/>
            <person name="Sweeney R.W."/>
            <person name="Clark D.P."/>
        </authorList>
    </citation>
    <scope>NUCLEOTIDE SEQUENCE [GENOMIC DNA]</scope>
    <source>
        <strain>AuCP-1</strain>
    </source>
</reference>
<feature type="chain" id="PRO_0000091010" description="Elongation factor 2">
    <location>
        <begin position="1"/>
        <end position="832"/>
    </location>
</feature>
<feature type="domain" description="tr-type G" evidence="3">
    <location>
        <begin position="17"/>
        <end position="336"/>
    </location>
</feature>
<feature type="region of interest" description="Disordered" evidence="4">
    <location>
        <begin position="580"/>
        <end position="608"/>
    </location>
</feature>
<feature type="compositionally biased region" description="Basic and acidic residues" evidence="4">
    <location>
        <begin position="593"/>
        <end position="608"/>
    </location>
</feature>
<feature type="binding site" evidence="2">
    <location>
        <begin position="26"/>
        <end position="33"/>
    </location>
    <ligand>
        <name>GTP</name>
        <dbReference type="ChEBI" id="CHEBI:37565"/>
    </ligand>
</feature>
<feature type="binding site" evidence="2">
    <location>
        <begin position="152"/>
        <end position="155"/>
    </location>
    <ligand>
        <name>GTP</name>
        <dbReference type="ChEBI" id="CHEBI:37565"/>
    </ligand>
</feature>
<feature type="binding site" evidence="2">
    <location>
        <begin position="207"/>
        <end position="209"/>
    </location>
    <ligand>
        <name>GTP</name>
        <dbReference type="ChEBI" id="CHEBI:37565"/>
    </ligand>
</feature>
<feature type="modified residue" description="Phosphothreonine" evidence="1">
    <location>
        <position position="57"/>
    </location>
</feature>
<feature type="modified residue" description="Phosphothreonine" evidence="1">
    <location>
        <position position="59"/>
    </location>
</feature>
<feature type="modified residue" description="Diphthamide" evidence="2">
    <location>
        <position position="689"/>
    </location>
</feature>
<evidence type="ECO:0000250" key="1"/>
<evidence type="ECO:0000250" key="2">
    <source>
        <dbReference type="UniProtKB" id="P32324"/>
    </source>
</evidence>
<evidence type="ECO:0000255" key="3">
    <source>
        <dbReference type="PROSITE-ProRule" id="PRU01059"/>
    </source>
</evidence>
<evidence type="ECO:0000256" key="4">
    <source>
        <dbReference type="SAM" id="MobiDB-lite"/>
    </source>
</evidence>
<comment type="function">
    <text evidence="2">Catalyzes the GTP-dependent ribosomal translocation step during translation elongation. During this step, the ribosome changes from the pre-translocational (PRE) to the post-translocational (POST) state as the newly formed A-site-bound peptidyl-tRNA and P-site-bound deacylated tRNA move to the P and E sites, respectively. Catalyzes the coordinated movement of the two tRNA molecules, the mRNA and conformational changes in the ribosome.</text>
</comment>
<comment type="catalytic activity">
    <reaction evidence="2">
        <text>GTP + H2O = GDP + phosphate + H(+)</text>
        <dbReference type="Rhea" id="RHEA:19669"/>
        <dbReference type="ChEBI" id="CHEBI:15377"/>
        <dbReference type="ChEBI" id="CHEBI:15378"/>
        <dbReference type="ChEBI" id="CHEBI:37565"/>
        <dbReference type="ChEBI" id="CHEBI:43474"/>
        <dbReference type="ChEBI" id="CHEBI:58189"/>
    </reaction>
    <physiologicalReaction direction="left-to-right" evidence="2">
        <dbReference type="Rhea" id="RHEA:19670"/>
    </physiologicalReaction>
</comment>
<comment type="subcellular location">
    <subcellularLocation>
        <location evidence="2">Cytoplasm</location>
    </subcellularLocation>
</comment>
<comment type="similarity">
    <text evidence="3">Belongs to the TRAFAC class translation factor GTPase superfamily. Classic translation factor GTPase family. EF-G/EF-2 subfamily.</text>
</comment>
<keyword id="KW-0963">Cytoplasm</keyword>
<keyword id="KW-0251">Elongation factor</keyword>
<keyword id="KW-0342">GTP-binding</keyword>
<keyword id="KW-0378">Hydrolase</keyword>
<keyword id="KW-0547">Nucleotide-binding</keyword>
<keyword id="KW-0597">Phosphoprotein</keyword>
<keyword id="KW-0648">Protein biosynthesis</keyword>
<accession>Q23716</accession>